<gene>
    <name evidence="1" type="primary">metAA</name>
    <name type="ordered locus">Avi_4253</name>
</gene>
<keyword id="KW-0012">Acyltransferase</keyword>
<keyword id="KW-0028">Amino-acid biosynthesis</keyword>
<keyword id="KW-0963">Cytoplasm</keyword>
<keyword id="KW-0486">Methionine biosynthesis</keyword>
<keyword id="KW-1185">Reference proteome</keyword>
<keyword id="KW-0808">Transferase</keyword>
<dbReference type="EC" id="2.3.1.31" evidence="1"/>
<dbReference type="EMBL" id="CP000633">
    <property type="protein sequence ID" value="ACM38080.1"/>
    <property type="molecule type" value="Genomic_DNA"/>
</dbReference>
<dbReference type="SMR" id="B9JUF7"/>
<dbReference type="STRING" id="311402.Avi_4253"/>
<dbReference type="KEGG" id="avi:Avi_4253"/>
<dbReference type="eggNOG" id="COG1897">
    <property type="taxonomic scope" value="Bacteria"/>
</dbReference>
<dbReference type="HOGENOM" id="CLU_057851_0_1_5"/>
<dbReference type="UniPathway" id="UPA00051">
    <property type="reaction ID" value="UER00074"/>
</dbReference>
<dbReference type="Proteomes" id="UP000001596">
    <property type="component" value="Chromosome 1"/>
</dbReference>
<dbReference type="GO" id="GO:0005737">
    <property type="term" value="C:cytoplasm"/>
    <property type="evidence" value="ECO:0007669"/>
    <property type="project" value="UniProtKB-SubCell"/>
</dbReference>
<dbReference type="GO" id="GO:0004414">
    <property type="term" value="F:homoserine O-acetyltransferase activity"/>
    <property type="evidence" value="ECO:0007669"/>
    <property type="project" value="UniProtKB-EC"/>
</dbReference>
<dbReference type="GO" id="GO:0008899">
    <property type="term" value="F:homoserine O-succinyltransferase activity"/>
    <property type="evidence" value="ECO:0007669"/>
    <property type="project" value="UniProtKB-UniRule"/>
</dbReference>
<dbReference type="GO" id="GO:0019281">
    <property type="term" value="P:L-methionine biosynthetic process from homoserine via O-succinyl-L-homoserine and cystathionine"/>
    <property type="evidence" value="ECO:0007669"/>
    <property type="project" value="InterPro"/>
</dbReference>
<dbReference type="CDD" id="cd03131">
    <property type="entry name" value="GATase1_HTS"/>
    <property type="match status" value="1"/>
</dbReference>
<dbReference type="Gene3D" id="3.40.50.880">
    <property type="match status" value="1"/>
</dbReference>
<dbReference type="HAMAP" id="MF_00295">
    <property type="entry name" value="MetA_acyltransf"/>
    <property type="match status" value="1"/>
</dbReference>
<dbReference type="InterPro" id="IPR029062">
    <property type="entry name" value="Class_I_gatase-like"/>
</dbReference>
<dbReference type="InterPro" id="IPR005697">
    <property type="entry name" value="HST_MetA"/>
</dbReference>
<dbReference type="InterPro" id="IPR033752">
    <property type="entry name" value="MetA_family"/>
</dbReference>
<dbReference type="NCBIfam" id="TIGR01001">
    <property type="entry name" value="metA"/>
    <property type="match status" value="1"/>
</dbReference>
<dbReference type="PANTHER" id="PTHR20919">
    <property type="entry name" value="HOMOSERINE O-SUCCINYLTRANSFERASE"/>
    <property type="match status" value="1"/>
</dbReference>
<dbReference type="PANTHER" id="PTHR20919:SF0">
    <property type="entry name" value="HOMOSERINE O-SUCCINYLTRANSFERASE"/>
    <property type="match status" value="1"/>
</dbReference>
<dbReference type="Pfam" id="PF04204">
    <property type="entry name" value="HTS"/>
    <property type="match status" value="1"/>
</dbReference>
<dbReference type="PIRSF" id="PIRSF000450">
    <property type="entry name" value="H_ser_succinyltr"/>
    <property type="match status" value="1"/>
</dbReference>
<dbReference type="SUPFAM" id="SSF52317">
    <property type="entry name" value="Class I glutamine amidotransferase-like"/>
    <property type="match status" value="1"/>
</dbReference>
<accession>B9JUF7</accession>
<comment type="function">
    <text evidence="1">Transfers an acetyl group from acetyl-CoA to L-homoserine, forming acetyl-L-homoserine.</text>
</comment>
<comment type="catalytic activity">
    <reaction evidence="1">
        <text>L-homoserine + acetyl-CoA = O-acetyl-L-homoserine + CoA</text>
        <dbReference type="Rhea" id="RHEA:13701"/>
        <dbReference type="ChEBI" id="CHEBI:57287"/>
        <dbReference type="ChEBI" id="CHEBI:57288"/>
        <dbReference type="ChEBI" id="CHEBI:57476"/>
        <dbReference type="ChEBI" id="CHEBI:57716"/>
        <dbReference type="EC" id="2.3.1.31"/>
    </reaction>
</comment>
<comment type="pathway">
    <text evidence="1">Amino-acid biosynthesis; L-methionine biosynthesis via de novo pathway; O-acetyl-L-homoserine from L-homoserine: step 1/1.</text>
</comment>
<comment type="subcellular location">
    <subcellularLocation>
        <location evidence="1">Cytoplasm</location>
    </subcellularLocation>
</comment>
<comment type="similarity">
    <text evidence="1">Belongs to the MetA family.</text>
</comment>
<evidence type="ECO:0000255" key="1">
    <source>
        <dbReference type="HAMAP-Rule" id="MF_00295"/>
    </source>
</evidence>
<name>METAA_ALLAM</name>
<organism>
    <name type="scientific">Allorhizobium ampelinum (strain ATCC BAA-846 / DSM 112012 / S4)</name>
    <name type="common">Agrobacterium vitis (strain S4)</name>
    <dbReference type="NCBI Taxonomy" id="311402"/>
    <lineage>
        <taxon>Bacteria</taxon>
        <taxon>Pseudomonadati</taxon>
        <taxon>Pseudomonadota</taxon>
        <taxon>Alphaproteobacteria</taxon>
        <taxon>Hyphomicrobiales</taxon>
        <taxon>Rhizobiaceae</taxon>
        <taxon>Rhizobium/Agrobacterium group</taxon>
        <taxon>Allorhizobium</taxon>
        <taxon>Allorhizobium ampelinum</taxon>
    </lineage>
</organism>
<proteinExistence type="inferred from homology"/>
<sequence>MPIKIPDTLPAFDALVHEGVRVMTETAAIRQDIRPLQIALLNLMPNKIKTEVQFARLIGASPLQVELTLVRIGGHKAKNTPEEHLLSFYQTWEEVKHRKFDGLIITGAPVETLPFEDVTYWSEMQQIFDWTQTNVHTTMNVCWGAMAAIYHFHKVPKHGLKEKAFGVFRHRNLAPSSIYLNGFSDDFQVPVSRWTEVRRADIEKVPDLNILMESDEMGVCLVQEDKGNRLYMFNHVEYDSTSLADEYFRDVSAGIPIRLPYDYFPHNDDTLTPLNRWRSHAHLLFGNWINEMYQTTSYDLNDIGKGRGI</sequence>
<protein>
    <recommendedName>
        <fullName evidence="1">Homoserine O-acetyltransferase</fullName>
        <shortName evidence="1">HAT</shortName>
        <ecNumber evidence="1">2.3.1.31</ecNumber>
    </recommendedName>
    <alternativeName>
        <fullName evidence="1">Homoserine transacetylase</fullName>
        <shortName evidence="1">HTA</shortName>
    </alternativeName>
</protein>
<reference key="1">
    <citation type="journal article" date="2009" name="J. Bacteriol.">
        <title>Genome sequences of three Agrobacterium biovars help elucidate the evolution of multichromosome genomes in bacteria.</title>
        <authorList>
            <person name="Slater S.C."/>
            <person name="Goldman B.S."/>
            <person name="Goodner B."/>
            <person name="Setubal J.C."/>
            <person name="Farrand S.K."/>
            <person name="Nester E.W."/>
            <person name="Burr T.J."/>
            <person name="Banta L."/>
            <person name="Dickerman A.W."/>
            <person name="Paulsen I."/>
            <person name="Otten L."/>
            <person name="Suen G."/>
            <person name="Welch R."/>
            <person name="Almeida N.F."/>
            <person name="Arnold F."/>
            <person name="Burton O.T."/>
            <person name="Du Z."/>
            <person name="Ewing A."/>
            <person name="Godsy E."/>
            <person name="Heisel S."/>
            <person name="Houmiel K.L."/>
            <person name="Jhaveri J."/>
            <person name="Lu J."/>
            <person name="Miller N.M."/>
            <person name="Norton S."/>
            <person name="Chen Q."/>
            <person name="Phoolcharoen W."/>
            <person name="Ohlin V."/>
            <person name="Ondrusek D."/>
            <person name="Pride N."/>
            <person name="Stricklin S.L."/>
            <person name="Sun J."/>
            <person name="Wheeler C."/>
            <person name="Wilson L."/>
            <person name="Zhu H."/>
            <person name="Wood D.W."/>
        </authorList>
    </citation>
    <scope>NUCLEOTIDE SEQUENCE [LARGE SCALE GENOMIC DNA]</scope>
    <source>
        <strain>ATCC BAA-846 / DSM 112012 / S4</strain>
    </source>
</reference>
<feature type="chain" id="PRO_1000191179" description="Homoserine O-acetyltransferase">
    <location>
        <begin position="1"/>
        <end position="309"/>
    </location>
</feature>
<feature type="active site" description="Acyl-thioester intermediate" evidence="1">
    <location>
        <position position="142"/>
    </location>
</feature>
<feature type="active site" description="Proton acceptor" evidence="1">
    <location>
        <position position="235"/>
    </location>
</feature>
<feature type="active site" evidence="1">
    <location>
        <position position="237"/>
    </location>
</feature>
<feature type="binding site" evidence="1">
    <location>
        <position position="163"/>
    </location>
    <ligand>
        <name>substrate</name>
    </ligand>
</feature>
<feature type="binding site" evidence="1">
    <location>
        <position position="192"/>
    </location>
    <ligand>
        <name>substrate</name>
    </ligand>
</feature>
<feature type="binding site" evidence="1">
    <location>
        <position position="249"/>
    </location>
    <ligand>
        <name>substrate</name>
    </ligand>
</feature>
<feature type="site" description="Important for acyl-CoA specificity" evidence="1">
    <location>
        <position position="111"/>
    </location>
</feature>
<feature type="site" description="Important for substrate specificity" evidence="1">
    <location>
        <position position="192"/>
    </location>
</feature>